<comment type="function">
    <text evidence="1 7 8 9">Snake venom phospholipase A2 (PLA2) that acts as a presynaptic neurotoxin, an inhibitor of blood coagulation, and has been found to bind with high affinity to intracellular proteins. The response of indirectly stimulated neuromuscular preparations to ammodytoxin (Atx) is triphasic. The first phase, the transient inhibition of the acetylcholine (ACh) release, starts soon after the addition of Atx and lasts for several minutes. This phase is probably independent of Atx enzymatic activity. The effect may be due to the specific binding of the toxin to presynaptic receptors. These receptors, called N-type receptors, are still unidentified. It is noteworthy that a neuronal isoform of the M-type PLA2 receptor (R180) has been identified as a high-affinity receptor for Atx in neuronal plasma membranes. It was demonstrated however that this receptor is not essential for expression of neurotoxicity by Atx. The second phase corresponds to an augmentation of neurotransmitter release. A peak is reached 10-20 minutes after exposure of the preparation to Atx and is followed by a gradual reduction. In this phase, the enzymatic activity of Atx of the mammalian is not significant. It is speculated that the increased release of neurotransmitter in this phase is induced by the interference of Atx with voltage-gated potassium channels. Measurements of ionic showed however that voltage-gated potassium channels are not affected by Atx. The third phase of the response of neuromuscular preparations to Atx, which corresponds to a complete and irreversible paralysis, is clearly dependent on the hydrolytic activity of the toxin. In addition to its presynaptic neurotoxicity, Atx shows an anticoagulant activity by binding with high affinity to activated coagulation factor X (F10) thus inhibiting the formation of the prothrombinase complex (FX/FV) and its activity (IC(50) is 240 nM). Surprisingly, Atx was discovered to bind intracellular proteins such as calmodulin (CaM), 14-3-3 proteins gamma (YWHAG) and epsilon (YWHAE), as well as R25, a mitochondrial integral membrane protein found in cerebral cortex. These findings raised a doubt about the dogma of the exclusively extracellular action of PLA2s, defended by the potential instability of these molecules in the reducing environment of the eukaryotic cytosol coupled with their possible inability to act as enzymes in this cellular compartment, due to too low concentration of calcium ions. This hypothesis was challenged efficiently by demonstrating the internalization of AtxA into a culture cells, but still remains to be directly demonstrated in vivo (By similarity). PLA2 catalyzes the calcium-dependent hydrolysis of the 2-acyl groups in 3-sn-phosphoglycerides.</text>
</comment>
<comment type="catalytic activity">
    <reaction evidence="4 5">
        <text>a 1,2-diacyl-sn-glycero-3-phosphocholine + H2O = a 1-acyl-sn-glycero-3-phosphocholine + a fatty acid + H(+)</text>
        <dbReference type="Rhea" id="RHEA:15801"/>
        <dbReference type="ChEBI" id="CHEBI:15377"/>
        <dbReference type="ChEBI" id="CHEBI:15378"/>
        <dbReference type="ChEBI" id="CHEBI:28868"/>
        <dbReference type="ChEBI" id="CHEBI:57643"/>
        <dbReference type="ChEBI" id="CHEBI:58168"/>
        <dbReference type="EC" id="3.1.1.4"/>
    </reaction>
</comment>
<comment type="cofactor">
    <cofactor evidence="1">
        <name>Ca(2+)</name>
        <dbReference type="ChEBI" id="CHEBI:29108"/>
    </cofactor>
    <text evidence="1">Binds 1 Ca(2+) ion.</text>
</comment>
<comment type="subunit">
    <text>Monomer. Binds to calmodulin, coagulation factor X (F10), 14-3-3 proteins gamma (YWHAG) and epsilon (YWHAE), and R25, a mitochondrial membrane protein. May bind to M-type PLA2 receptor (R-180).</text>
</comment>
<comment type="subcellular location">
    <subcellularLocation>
        <location>Secreted</location>
    </subcellularLocation>
    <subcellularLocation>
        <location evidence="1">Host cytoplasm</location>
        <location evidence="1">Host cytosol</location>
    </subcellularLocation>
</comment>
<comment type="tissue specificity">
    <text>Expressed by the venom gland.</text>
</comment>
<comment type="toxic dose">
    <text evidence="6">LD(50) is 0.36 mg/kg by intravenous injection into mice.</text>
</comment>
<comment type="miscellaneous">
    <text evidence="13">Negative results: does not affect mKv1.1/KCNA1, rKv1.2/KCNA2, mKv1.3/KCNA3, hKv1.5/KCNA5 and mKv3.1/KCNC1 voltage-gated potassium channels.</text>
</comment>
<comment type="similarity">
    <text evidence="12">Belongs to the phospholipase A2 family. Group II subfamily. D49 sub-subfamily.</text>
</comment>
<name>PA2BC_VIPAA</name>
<evidence type="ECO:0000250" key="1"/>
<evidence type="ECO:0000250" key="2">
    <source>
        <dbReference type="UniProtKB" id="P14418"/>
    </source>
</evidence>
<evidence type="ECO:0000250" key="3">
    <source>
        <dbReference type="UniProtKB" id="P59071"/>
    </source>
</evidence>
<evidence type="ECO:0000255" key="4">
    <source>
        <dbReference type="PROSITE-ProRule" id="PRU10035"/>
    </source>
</evidence>
<evidence type="ECO:0000255" key="5">
    <source>
        <dbReference type="PROSITE-ProRule" id="PRU10036"/>
    </source>
</evidence>
<evidence type="ECO:0000269" key="6">
    <source>
    </source>
</evidence>
<evidence type="ECO:0000269" key="7">
    <source>
    </source>
</evidence>
<evidence type="ECO:0000269" key="8">
    <source>
    </source>
</evidence>
<evidence type="ECO:0000269" key="9">
    <source>
    </source>
</evidence>
<evidence type="ECO:0000269" key="10">
    <source>
    </source>
</evidence>
<evidence type="ECO:0000269" key="11">
    <source>
    </source>
</evidence>
<evidence type="ECO:0000305" key="12"/>
<evidence type="ECO:0000305" key="13">
    <source>
    </source>
</evidence>
<evidence type="ECO:0007744" key="14">
    <source>
        <dbReference type="PDB" id="3G8H"/>
    </source>
</evidence>
<evidence type="ECO:0007829" key="15">
    <source>
        <dbReference type="PDB" id="3G8H"/>
    </source>
</evidence>
<sequence length="138" mass="15498">MRTLWIVAVCLIGVEGSLLEFGMMILGETGKNPLTSYSFYGCYCGVGGKGTPKDATDRCCFVHDCCYGNLPDCSPKTDRYKYHRENGAIVCGKGTSCENRICECDRAAAICFRKNLKTYNYIYRNYPDILCKEESEKC</sequence>
<proteinExistence type="evidence at protein level"/>
<organism>
    <name type="scientific">Vipera ammodytes ammodytes</name>
    <name type="common">Western sand viper</name>
    <dbReference type="NCBI Taxonomy" id="8705"/>
    <lineage>
        <taxon>Eukaryota</taxon>
        <taxon>Metazoa</taxon>
        <taxon>Chordata</taxon>
        <taxon>Craniata</taxon>
        <taxon>Vertebrata</taxon>
        <taxon>Euteleostomi</taxon>
        <taxon>Lepidosauria</taxon>
        <taxon>Squamata</taxon>
        <taxon>Bifurcata</taxon>
        <taxon>Unidentata</taxon>
        <taxon>Episquamata</taxon>
        <taxon>Toxicofera</taxon>
        <taxon>Serpentes</taxon>
        <taxon>Colubroidea</taxon>
        <taxon>Viperidae</taxon>
        <taxon>Viperinae</taxon>
        <taxon>Vipera</taxon>
    </lineage>
</organism>
<protein>
    <recommendedName>
        <fullName>Basic phospholipase A2 ammodytoxin C</fullName>
        <shortName>AtxC</shortName>
        <shortName>svPLA2</shortName>
        <ecNumber>3.1.1.4</ecNumber>
    </recommendedName>
    <alternativeName>
        <fullName>Phosphatidylcholine 2-acylhydrolase</fullName>
    </alternativeName>
</protein>
<feature type="signal peptide" evidence="11">
    <location>
        <begin position="1"/>
        <end position="16"/>
    </location>
</feature>
<feature type="chain" id="PRO_0000022972" description="Basic phospholipase A2 ammodytoxin C" evidence="11">
    <location>
        <begin position="17"/>
        <end position="138"/>
    </location>
</feature>
<feature type="active site" evidence="2">
    <location>
        <position position="63"/>
    </location>
</feature>
<feature type="active site" evidence="2">
    <location>
        <position position="105"/>
    </location>
</feature>
<feature type="binding site" evidence="3">
    <location>
        <position position="43"/>
    </location>
    <ligand>
        <name>Ca(2+)</name>
        <dbReference type="ChEBI" id="CHEBI:29108"/>
    </ligand>
</feature>
<feature type="binding site" evidence="3">
    <location>
        <position position="45"/>
    </location>
    <ligand>
        <name>Ca(2+)</name>
        <dbReference type="ChEBI" id="CHEBI:29108"/>
    </ligand>
</feature>
<feature type="binding site" evidence="3">
    <location>
        <position position="47"/>
    </location>
    <ligand>
        <name>Ca(2+)</name>
        <dbReference type="ChEBI" id="CHEBI:29108"/>
    </ligand>
</feature>
<feature type="binding site" evidence="3">
    <location>
        <position position="64"/>
    </location>
    <ligand>
        <name>Ca(2+)</name>
        <dbReference type="ChEBI" id="CHEBI:29108"/>
    </ligand>
</feature>
<feature type="site" description="Putative membrane binding site">
    <location>
        <position position="18"/>
    </location>
</feature>
<feature type="site" description="Putative membrane binding site">
    <location>
        <position position="19"/>
    </location>
</feature>
<feature type="site" description="Putative membrane binding site">
    <location>
        <position position="34"/>
    </location>
</feature>
<feature type="site" description="Putative membrane binding site">
    <location>
        <position position="35"/>
    </location>
</feature>
<feature type="site" description="Putative membrane binding site">
    <location>
        <position position="39"/>
    </location>
</feature>
<feature type="site" description="Putative membrane binding site">
    <location>
        <position position="46"/>
    </location>
</feature>
<feature type="site" description="Putative membrane binding site">
    <location>
        <position position="76"/>
    </location>
</feature>
<feature type="site" description="Putative membrane binding site">
    <location>
        <position position="77"/>
    </location>
</feature>
<feature type="site" description="Putative membrane binding site">
    <location>
        <position position="79"/>
    </location>
</feature>
<feature type="site" description="Putative membrane binding site">
    <location>
        <position position="82"/>
    </location>
</feature>
<feature type="site" description="Putative membrane binding site">
    <location>
        <position position="124"/>
    </location>
</feature>
<feature type="site" description="Putative membrane binding site">
    <location>
        <position position="125"/>
    </location>
</feature>
<feature type="site" description="Putative membrane binding site">
    <location>
        <position position="129"/>
    </location>
</feature>
<feature type="disulfide bond" evidence="10 14">
    <location>
        <begin position="42"/>
        <end position="131"/>
    </location>
</feature>
<feature type="disulfide bond" evidence="10 14">
    <location>
        <begin position="44"/>
        <end position="60"/>
    </location>
</feature>
<feature type="disulfide bond" evidence="10 14">
    <location>
        <begin position="59"/>
        <end position="111"/>
    </location>
</feature>
<feature type="disulfide bond" evidence="10 14">
    <location>
        <begin position="65"/>
        <end position="138"/>
    </location>
</feature>
<feature type="disulfide bond" evidence="10 14">
    <location>
        <begin position="66"/>
        <end position="104"/>
    </location>
</feature>
<feature type="disulfide bond" evidence="10 14">
    <location>
        <begin position="73"/>
        <end position="97"/>
    </location>
</feature>
<feature type="disulfide bond" evidence="10 14">
    <location>
        <begin position="91"/>
        <end position="102"/>
    </location>
</feature>
<feature type="helix" evidence="15">
    <location>
        <begin position="18"/>
        <end position="29"/>
    </location>
</feature>
<feature type="helix" evidence="15">
    <location>
        <begin position="33"/>
        <end position="36"/>
    </location>
</feature>
<feature type="strand" evidence="15">
    <location>
        <begin position="37"/>
        <end position="40"/>
    </location>
</feature>
<feature type="turn" evidence="15">
    <location>
        <begin position="41"/>
        <end position="43"/>
    </location>
</feature>
<feature type="strand" evidence="15">
    <location>
        <begin position="44"/>
        <end position="47"/>
    </location>
</feature>
<feature type="helix" evidence="15">
    <location>
        <begin position="55"/>
        <end position="68"/>
    </location>
</feature>
<feature type="turn" evidence="15">
    <location>
        <begin position="75"/>
        <end position="77"/>
    </location>
</feature>
<feature type="strand" evidence="15">
    <location>
        <begin position="82"/>
        <end position="85"/>
    </location>
</feature>
<feature type="strand" evidence="15">
    <location>
        <begin position="88"/>
        <end position="91"/>
    </location>
</feature>
<feature type="helix" evidence="15">
    <location>
        <begin position="96"/>
        <end position="114"/>
    </location>
</feature>
<feature type="helix" evidence="15">
    <location>
        <begin position="116"/>
        <end position="118"/>
    </location>
</feature>
<feature type="helix" evidence="15">
    <location>
        <begin position="121"/>
        <end position="123"/>
    </location>
</feature>
<feature type="helix" evidence="15">
    <location>
        <begin position="128"/>
        <end position="130"/>
    </location>
</feature>
<accession>P11407</accession>
<reference key="1">
    <citation type="journal article" date="1989" name="Nucleic Acids Res.">
        <title>Amino acid sequence of ammodytoxin C as deduced from cDNA.</title>
        <authorList>
            <person name="Pungercar J."/>
            <person name="Kordis D."/>
            <person name="Jerala R."/>
            <person name="Trstenjak-Prebanda M."/>
            <person name="Dolinar M."/>
            <person name="Curin-Serbec V."/>
            <person name="Komel R."/>
            <person name="Gubensek F."/>
        </authorList>
    </citation>
    <scope>NUCLEOTIDE SEQUENCE [MRNA]</scope>
    <source>
        <strain>Northern Balkan</strain>
        <tissue>Venom gland</tissue>
    </source>
</reference>
<reference key="2">
    <citation type="journal article" date="1996" name="Eur. J. Biochem.">
        <title>Ammodytoxin C gene helps to elucidate the irregular structure of Crotalinae group II phospholipase A2 genes.</title>
        <authorList>
            <person name="Kordis D."/>
            <person name="Gubensek F."/>
        </authorList>
    </citation>
    <scope>NUCLEOTIDE SEQUENCE [GENOMIC DNA]</scope>
    <source>
        <tissue>Venom gland</tissue>
    </source>
</reference>
<reference key="3">
    <citation type="journal article" date="1989" name="Biochim. Biophys. Acta">
        <title>Primary structure of ammodytoxin C further reveals the toxic site of ammodytoxin.</title>
        <authorList>
            <person name="Krizaj I."/>
            <person name="Turk D."/>
            <person name="Ritonja A."/>
            <person name="Gubensek F."/>
        </authorList>
    </citation>
    <scope>PROTEIN SEQUENCE OF 17-138</scope>
    <source>
        <strain>Northern Balkan</strain>
        <tissue>Venom</tissue>
    </source>
</reference>
<reference key="4">
    <citation type="journal article" date="2011" name="Toxicon">
        <title>Ammodytoxin: a window into understanding presynaptic toxicity of secreted phospholipases A(2) and more.</title>
        <authorList>
            <person name="Krizaj I."/>
        </authorList>
    </citation>
    <scope>REVIEW</scope>
</reference>
<reference key="5">
    <citation type="journal article" date="1998" name="Biochem. Biophys. Res. Commun.">
        <title>Identification of a new high-affinity binding protein for neurotoxic phospholipases A2.</title>
        <authorList>
            <person name="Vucemilo N."/>
            <person name="Copic A."/>
            <person name="Gubensek F."/>
            <person name="Krizaj I."/>
        </authorList>
    </citation>
    <scope>BINDING TO AN INTRACELLULAR MEMBRANE PROTEIN (R25)</scope>
</reference>
<reference key="6">
    <citation type="journal article" date="1999" name="Biochem. J.">
        <title>An aromatic, but not a basic, residue is involved in the toxicity of group-II phospholipase A2 neurotoxins.</title>
        <authorList>
            <person name="Pungercar J."/>
            <person name="Krizaj I."/>
            <person name="Liang N.-S."/>
            <person name="Gubensek F."/>
        </authorList>
    </citation>
    <scope>TOXIC DOSE</scope>
</reference>
<reference key="7">
    <citation type="journal article" date="2001" name="J. Biol. Chem.">
        <title>A high affinity acceptor for phospholipase A2 with neurotoxic activity is a calmodulin.</title>
        <authorList>
            <person name="Sribar J."/>
            <person name="Copic A."/>
            <person name="Paris A."/>
            <person name="Sherman N.E."/>
            <person name="Gubensek F."/>
            <person name="Fox J.W."/>
            <person name="Krizaj I."/>
        </authorList>
    </citation>
    <scope>BINDING TO CALMODULIN</scope>
</reference>
<reference key="8">
    <citation type="journal article" date="2001" name="Toxicon">
        <title>The facilitatory actions of snake venom phospholipase A(2) neurotoxins at the neuromuscular junction are not mediated through voltage-gated K(+) channels.</title>
        <authorList>
            <person name="Fathi B."/>
            <person name="Rowan E.G."/>
            <person name="Harvey A.L."/>
        </authorList>
    </citation>
    <scope>FUNCTION</scope>
</reference>
<reference key="9">
    <citation type="journal article" date="2003" name="Biochem. Biophys. Res. Commun.">
        <title>The neurotoxic phospholipase A2 associates, through a non-phosphorylated binding motif, with 14-3-3 protein gamma and epsilon isoforms.</title>
        <authorList>
            <person name="Sribar J."/>
            <person name="Sherman N.E."/>
            <person name="Prijatelj P."/>
            <person name="Faure G."/>
            <person name="Gubensek F."/>
            <person name="Fox J.W."/>
            <person name="Aitken A."/>
            <person name="Pungercar J."/>
            <person name="Krizaj I."/>
        </authorList>
    </citation>
    <scope>BINDING TO 14-3-3 PROTEINS GAMMA (YWHAG) AND EPSILON (YWHAE)</scope>
</reference>
<reference key="10">
    <citation type="journal article" date="2003" name="FEBS Lett.">
        <title>R25 is an intracellular membrane receptor for a snake venom secretory phospholipase A(2).</title>
        <authorList>
            <person name="Sribar J."/>
            <person name="Copic A."/>
            <person name="Poljsak-Prijatelj M."/>
            <person name="Kuret J."/>
            <person name="Logonder U."/>
            <person name="Gubensek F."/>
            <person name="Krizaj I."/>
        </authorList>
    </citation>
    <scope>BINDING TO AN INTRACELLULAR MEMBRANE PROTEIN (R25)</scope>
</reference>
<reference key="11">
    <citation type="journal article" date="2005" name="Biochemistry">
        <title>Ammodytoxins, potent presynaptic neurotoxins, are also highly efficient phospholipase A2 enzymes.</title>
        <authorList>
            <person name="Petan T."/>
            <person name="Krizaj I."/>
            <person name="Gelb M.H."/>
            <person name="Pungercar J."/>
        </authorList>
    </citation>
    <scope>FUNCTION</scope>
    <source>
        <tissue>Venom</tissue>
    </source>
</reference>
<reference key="12">
    <citation type="journal article" date="2006" name="Biochimie">
        <title>The C-terminal and beta-wing regions of ammodytoxin A, a neurotoxic phospholipase A2 from Vipera ammodytes ammodytes, are critical for binding to factor Xa and for anticoagulant effect.</title>
        <authorList>
            <person name="Prijatelj P."/>
            <person name="Charnay M."/>
            <person name="Ivanovski G."/>
            <person name="Jenko Z."/>
            <person name="Pungercar J."/>
            <person name="Krizaj I."/>
            <person name="Faure G."/>
        </authorList>
    </citation>
    <scope>FUNCTION</scope>
    <scope>BINDING TO COAGULATION FACTOR X (F10)</scope>
</reference>
<reference key="13">
    <citation type="journal article" date="2010" name="J. Struct. Biol.">
        <title>Comparative structural studies of two natural isoforms of ammodytoxin, phospholipases A2 from Vipera ammodytes ammodytes which differ in neurotoxicity and anticoagulant activity.</title>
        <authorList>
            <person name="Saul F.A."/>
            <person name="Prijatelj-Znidarsic P."/>
            <person name="Vulliez-le Normand B."/>
            <person name="Villette B."/>
            <person name="Raynal B."/>
            <person name="Pungercar J."/>
            <person name="Krizaj I."/>
            <person name="Faure G."/>
        </authorList>
    </citation>
    <scope>X-RAY CRYSTALLOGRAPHY (1.35 ANGSTROMS) OF 17-138</scope>
    <scope>DISULFIDE BONDS</scope>
</reference>
<dbReference type="EC" id="3.1.1.4"/>
<dbReference type="EMBL" id="X15138">
    <property type="protein sequence ID" value="CAA33238.1"/>
    <property type="molecule type" value="mRNA"/>
</dbReference>
<dbReference type="EMBL" id="X76731">
    <property type="protein sequence ID" value="CAA54147.1"/>
    <property type="molecule type" value="Genomic_DNA"/>
</dbReference>
<dbReference type="PIR" id="I51386">
    <property type="entry name" value="I51386"/>
</dbReference>
<dbReference type="PIR" id="S04587">
    <property type="entry name" value="PSVIAC"/>
</dbReference>
<dbReference type="PDB" id="3G8H">
    <property type="method" value="X-ray"/>
    <property type="resolution" value="1.35 A"/>
    <property type="chains" value="A=17-138"/>
</dbReference>
<dbReference type="PDBsum" id="3G8H"/>
<dbReference type="SMR" id="P11407"/>
<dbReference type="EvolutionaryTrace" id="P11407"/>
<dbReference type="GO" id="GO:0005576">
    <property type="term" value="C:extracellular region"/>
    <property type="evidence" value="ECO:0007669"/>
    <property type="project" value="UniProtKB-SubCell"/>
</dbReference>
<dbReference type="GO" id="GO:0005509">
    <property type="term" value="F:calcium ion binding"/>
    <property type="evidence" value="ECO:0007669"/>
    <property type="project" value="InterPro"/>
</dbReference>
<dbReference type="GO" id="GO:0047498">
    <property type="term" value="F:calcium-dependent phospholipase A2 activity"/>
    <property type="evidence" value="ECO:0007669"/>
    <property type="project" value="TreeGrafter"/>
</dbReference>
<dbReference type="GO" id="GO:0005543">
    <property type="term" value="F:phospholipid binding"/>
    <property type="evidence" value="ECO:0007669"/>
    <property type="project" value="TreeGrafter"/>
</dbReference>
<dbReference type="GO" id="GO:0090729">
    <property type="term" value="F:toxin activity"/>
    <property type="evidence" value="ECO:0007669"/>
    <property type="project" value="UniProtKB-KW"/>
</dbReference>
<dbReference type="GO" id="GO:0050482">
    <property type="term" value="P:arachidonate secretion"/>
    <property type="evidence" value="ECO:0007669"/>
    <property type="project" value="InterPro"/>
</dbReference>
<dbReference type="GO" id="GO:0016042">
    <property type="term" value="P:lipid catabolic process"/>
    <property type="evidence" value="ECO:0007669"/>
    <property type="project" value="UniProtKB-KW"/>
</dbReference>
<dbReference type="GO" id="GO:0042130">
    <property type="term" value="P:negative regulation of T cell proliferation"/>
    <property type="evidence" value="ECO:0007669"/>
    <property type="project" value="TreeGrafter"/>
</dbReference>
<dbReference type="GO" id="GO:0006644">
    <property type="term" value="P:phospholipid metabolic process"/>
    <property type="evidence" value="ECO:0007669"/>
    <property type="project" value="InterPro"/>
</dbReference>
<dbReference type="CDD" id="cd00125">
    <property type="entry name" value="PLA2c"/>
    <property type="match status" value="1"/>
</dbReference>
<dbReference type="FunFam" id="1.20.90.10:FF:000001">
    <property type="entry name" value="Basic phospholipase A2 homolog"/>
    <property type="match status" value="1"/>
</dbReference>
<dbReference type="Gene3D" id="1.20.90.10">
    <property type="entry name" value="Phospholipase A2 domain"/>
    <property type="match status" value="1"/>
</dbReference>
<dbReference type="InterPro" id="IPR001211">
    <property type="entry name" value="PLipase_A2"/>
</dbReference>
<dbReference type="InterPro" id="IPR033112">
    <property type="entry name" value="PLipase_A2_Asp_AS"/>
</dbReference>
<dbReference type="InterPro" id="IPR016090">
    <property type="entry name" value="PLipase_A2_dom"/>
</dbReference>
<dbReference type="InterPro" id="IPR036444">
    <property type="entry name" value="PLipase_A2_dom_sf"/>
</dbReference>
<dbReference type="InterPro" id="IPR033113">
    <property type="entry name" value="PLipase_A2_His_AS"/>
</dbReference>
<dbReference type="PANTHER" id="PTHR11716">
    <property type="entry name" value="PHOSPHOLIPASE A2 FAMILY MEMBER"/>
    <property type="match status" value="1"/>
</dbReference>
<dbReference type="PANTHER" id="PTHR11716:SF9">
    <property type="entry name" value="PHOSPHOLIPASE A2, MEMBRANE ASSOCIATED"/>
    <property type="match status" value="1"/>
</dbReference>
<dbReference type="Pfam" id="PF00068">
    <property type="entry name" value="Phospholip_A2_1"/>
    <property type="match status" value="1"/>
</dbReference>
<dbReference type="PRINTS" id="PR00389">
    <property type="entry name" value="PHPHLIPASEA2"/>
</dbReference>
<dbReference type="SMART" id="SM00085">
    <property type="entry name" value="PA2c"/>
    <property type="match status" value="1"/>
</dbReference>
<dbReference type="SUPFAM" id="SSF48619">
    <property type="entry name" value="Phospholipase A2, PLA2"/>
    <property type="match status" value="1"/>
</dbReference>
<dbReference type="PROSITE" id="PS00119">
    <property type="entry name" value="PA2_ASP"/>
    <property type="match status" value="1"/>
</dbReference>
<dbReference type="PROSITE" id="PS00118">
    <property type="entry name" value="PA2_HIS"/>
    <property type="match status" value="1"/>
</dbReference>
<keyword id="KW-0002">3D-structure</keyword>
<keyword id="KW-1203">Blood coagulation cascade inhibiting toxin</keyword>
<keyword id="KW-0106">Calcium</keyword>
<keyword id="KW-0903">Direct protein sequencing</keyword>
<keyword id="KW-1015">Disulfide bond</keyword>
<keyword id="KW-1199">Hemostasis impairing toxin</keyword>
<keyword id="KW-1035">Host cytoplasm</keyword>
<keyword id="KW-0378">Hydrolase</keyword>
<keyword id="KW-0442">Lipid degradation</keyword>
<keyword id="KW-0443">Lipid metabolism</keyword>
<keyword id="KW-0479">Metal-binding</keyword>
<keyword id="KW-0528">Neurotoxin</keyword>
<keyword id="KW-0638">Presynaptic neurotoxin</keyword>
<keyword id="KW-0964">Secreted</keyword>
<keyword id="KW-0732">Signal</keyword>
<keyword id="KW-0800">Toxin</keyword>